<accession>P84368</accession>
<keyword id="KW-0027">Amidation</keyword>
<keyword id="KW-0903">Direct protein sequencing</keyword>
<keyword id="KW-0527">Neuropeptide</keyword>
<keyword id="KW-0964">Secreted</keyword>
<name>PPK6_PERAU</name>
<comment type="function">
    <text evidence="1">Myoactive.</text>
</comment>
<comment type="subcellular location">
    <subcellularLocation>
        <location evidence="4">Secreted</location>
    </subcellularLocation>
</comment>
<comment type="tissue specificity">
    <text evidence="4">Expressed in the brain, subesophageal ganglion and in the retrocerebral complex (mainly corpora cardiaca).</text>
</comment>
<comment type="mass spectrometry"/>
<comment type="similarity">
    <text evidence="2">Belongs to the pyrokinin family.</text>
</comment>
<reference evidence="5" key="1">
    <citation type="journal article" date="2005" name="Peptides">
        <title>Peptidomics of neurohemal organs from species of the cockroach family Blattidae: how do neuropeptides of closely related species differ?</title>
        <authorList>
            <person name="Predel R."/>
            <person name="Gaede G."/>
        </authorList>
    </citation>
    <scope>PROTEIN SEQUENCE</scope>
    <scope>MASS SPECTROMETRY</scope>
    <scope>AMIDATION AT LEU-14</scope>
    <source>
        <tissue evidence="3">Corpora allata</tissue>
    </source>
</reference>
<reference evidence="5" key="2">
    <citation type="submission" date="2004-11" db="UniProtKB">
        <authorList>
            <person name="Predel R."/>
            <person name="Gaede G."/>
        </authorList>
    </citation>
    <scope>SUBCELLULAR LOCATION</scope>
    <scope>TISSUE SPECIFICITY</scope>
</reference>
<feature type="peptide" id="PRO_0000044360" description="Pyrokinin-6">
    <location>
        <begin position="1"/>
        <end position="14"/>
    </location>
</feature>
<feature type="modified residue" description="Leucine amide" evidence="3">
    <location>
        <position position="14"/>
    </location>
</feature>
<protein>
    <recommendedName>
        <fullName>Pyrokinin-6</fullName>
        <shortName>Perau-PK-6</shortName>
    </recommendedName>
    <alternativeName>
        <fullName>FXPRL-amide</fullName>
    </alternativeName>
</protein>
<proteinExistence type="evidence at protein level"/>
<evidence type="ECO:0000250" key="1">
    <source>
        <dbReference type="UniProtKB" id="P82693"/>
    </source>
</evidence>
<evidence type="ECO:0000255" key="2"/>
<evidence type="ECO:0000269" key="3">
    <source>
    </source>
</evidence>
<evidence type="ECO:0000269" key="4">
    <source ref="2"/>
</evidence>
<evidence type="ECO:0000305" key="5"/>
<organism>
    <name type="scientific">Periplaneta australasiae</name>
    <name type="common">Australian cockroach</name>
    <name type="synonym">Blatta australasiae</name>
    <dbReference type="NCBI Taxonomy" id="36975"/>
    <lineage>
        <taxon>Eukaryota</taxon>
        <taxon>Metazoa</taxon>
        <taxon>Ecdysozoa</taxon>
        <taxon>Arthropoda</taxon>
        <taxon>Hexapoda</taxon>
        <taxon>Insecta</taxon>
        <taxon>Pterygota</taxon>
        <taxon>Neoptera</taxon>
        <taxon>Polyneoptera</taxon>
        <taxon>Dictyoptera</taxon>
        <taxon>Blattodea</taxon>
        <taxon>Blattoidea</taxon>
        <taxon>Blattidae</taxon>
        <taxon>Blattinae</taxon>
        <taxon>Periplaneta</taxon>
    </lineage>
</organism>
<sequence>NDPEVPGMWFGPRL</sequence>
<dbReference type="GO" id="GO:0005576">
    <property type="term" value="C:extracellular region"/>
    <property type="evidence" value="ECO:0007669"/>
    <property type="project" value="UniProtKB-SubCell"/>
</dbReference>
<dbReference type="GO" id="GO:0005184">
    <property type="term" value="F:neuropeptide hormone activity"/>
    <property type="evidence" value="ECO:0007669"/>
    <property type="project" value="InterPro"/>
</dbReference>
<dbReference type="GO" id="GO:0007218">
    <property type="term" value="P:neuropeptide signaling pathway"/>
    <property type="evidence" value="ECO:0007669"/>
    <property type="project" value="UniProtKB-KW"/>
</dbReference>
<dbReference type="InterPro" id="IPR001484">
    <property type="entry name" value="Pyrokinin_CS"/>
</dbReference>
<dbReference type="PROSITE" id="PS00539">
    <property type="entry name" value="PYROKININ"/>
    <property type="match status" value="1"/>
</dbReference>